<reference key="1">
    <citation type="journal article" date="2001" name="Genome Res.">
        <title>The complete genome sequence of the lactic acid bacterium Lactococcus lactis ssp. lactis IL1403.</title>
        <authorList>
            <person name="Bolotin A."/>
            <person name="Wincker P."/>
            <person name="Mauger S."/>
            <person name="Jaillon O."/>
            <person name="Malarme K."/>
            <person name="Weissenbach J."/>
            <person name="Ehrlich S.D."/>
            <person name="Sorokin A."/>
        </authorList>
    </citation>
    <scope>NUCLEOTIDE SEQUENCE [LARGE SCALE GENOMIC DNA]</scope>
    <source>
        <strain>IL1403</strain>
    </source>
</reference>
<keyword id="KW-0030">Aminoacyl-tRNA synthetase</keyword>
<keyword id="KW-0067">ATP-binding</keyword>
<keyword id="KW-0963">Cytoplasm</keyword>
<keyword id="KW-0436">Ligase</keyword>
<keyword id="KW-0547">Nucleotide-binding</keyword>
<keyword id="KW-0648">Protein biosynthesis</keyword>
<keyword id="KW-1185">Reference proteome</keyword>
<name>SYE_LACLA</name>
<feature type="chain" id="PRO_0000119584" description="Glutamate--tRNA ligase">
    <location>
        <begin position="1"/>
        <end position="483"/>
    </location>
</feature>
<feature type="short sequence motif" description="'HIGH' region" evidence="1">
    <location>
        <begin position="11"/>
        <end position="21"/>
    </location>
</feature>
<feature type="short sequence motif" description="'KMSKS' region" evidence="1">
    <location>
        <begin position="255"/>
        <end position="259"/>
    </location>
</feature>
<feature type="binding site" evidence="1">
    <location>
        <position position="258"/>
    </location>
    <ligand>
        <name>ATP</name>
        <dbReference type="ChEBI" id="CHEBI:30616"/>
    </ligand>
</feature>
<proteinExistence type="inferred from homology"/>
<evidence type="ECO:0000255" key="1">
    <source>
        <dbReference type="HAMAP-Rule" id="MF_00022"/>
    </source>
</evidence>
<protein>
    <recommendedName>
        <fullName evidence="1">Glutamate--tRNA ligase</fullName>
        <ecNumber evidence="1">6.1.1.17</ecNumber>
    </recommendedName>
    <alternativeName>
        <fullName evidence="1">Glutamyl-tRNA synthetase</fullName>
        <shortName evidence="1">GluRS</shortName>
    </alternativeName>
</protein>
<sequence length="483" mass="55462">MNKKIRVRYAPSPTGLLHIGNARTALFNYLFARHHGGDFIIRIEDTDRERHVEDGERSQLENLRWLGMDWDESPETHENYRQSERLPLYQKYIDQLLTEGKAYYSYKTPEELEADHAKQEAAGIAPHYINEYAGMSDDEKAAYIAERKAQNIEPVVRISVDEKAIYKWNDIVKGDIEFEGKNIGGDWVIQKRDGYPTYNFAVVVDDHDMQISHVIRGDDHIANTPKQLVVYDALGWEAPQFGHMTLIINSETGKKLSKRDTNTLQFIEDYRKKGYMSDAIFNFIALLGWNPGGEKEIFSREELIELFDEHRLSKSPAAFDQKKLDWLDNEYIKNADFAKVFELTKPFLVAANRFDERAEELVKLYQPQMKSADEIVELTDLFYGDFPELTDEAREMLAAETTPLALSTFRAKLAELPENDFTVENIFPLFKATQKETGVKGKMLWMPIRIAASGSMHGPELPETIALLGKEKVLAHLDAALNK</sequence>
<dbReference type="EC" id="6.1.1.17" evidence="1"/>
<dbReference type="EMBL" id="AE005176">
    <property type="protein sequence ID" value="AAK06151.1"/>
    <property type="molecule type" value="Genomic_DNA"/>
</dbReference>
<dbReference type="PIR" id="E86881">
    <property type="entry name" value="E86881"/>
</dbReference>
<dbReference type="RefSeq" id="NP_268210.1">
    <property type="nucleotide sequence ID" value="NC_002662.1"/>
</dbReference>
<dbReference type="RefSeq" id="WP_010906290.1">
    <property type="nucleotide sequence ID" value="NC_002662.1"/>
</dbReference>
<dbReference type="SMR" id="Q9CDZ7"/>
<dbReference type="PaxDb" id="272623-L0349"/>
<dbReference type="EnsemblBacteria" id="AAK06151">
    <property type="protein sequence ID" value="AAK06151"/>
    <property type="gene ID" value="L0349"/>
</dbReference>
<dbReference type="GeneID" id="89634406"/>
<dbReference type="KEGG" id="lla:L0349"/>
<dbReference type="PATRIC" id="fig|272623.7.peg.2211"/>
<dbReference type="eggNOG" id="COG0008">
    <property type="taxonomic scope" value="Bacteria"/>
</dbReference>
<dbReference type="HOGENOM" id="CLU_015768_6_1_9"/>
<dbReference type="OrthoDB" id="9807503at2"/>
<dbReference type="Proteomes" id="UP000002196">
    <property type="component" value="Chromosome"/>
</dbReference>
<dbReference type="GO" id="GO:0009986">
    <property type="term" value="C:cell surface"/>
    <property type="evidence" value="ECO:0000314"/>
    <property type="project" value="CAFA"/>
</dbReference>
<dbReference type="GO" id="GO:0005829">
    <property type="term" value="C:cytosol"/>
    <property type="evidence" value="ECO:0007669"/>
    <property type="project" value="TreeGrafter"/>
</dbReference>
<dbReference type="GO" id="GO:0005524">
    <property type="term" value="F:ATP binding"/>
    <property type="evidence" value="ECO:0007669"/>
    <property type="project" value="UniProtKB-UniRule"/>
</dbReference>
<dbReference type="GO" id="GO:0004818">
    <property type="term" value="F:glutamate-tRNA ligase activity"/>
    <property type="evidence" value="ECO:0007669"/>
    <property type="project" value="UniProtKB-UniRule"/>
</dbReference>
<dbReference type="GO" id="GO:2001065">
    <property type="term" value="F:mannan binding"/>
    <property type="evidence" value="ECO:0000314"/>
    <property type="project" value="CAFA"/>
</dbReference>
<dbReference type="GO" id="GO:0000049">
    <property type="term" value="F:tRNA binding"/>
    <property type="evidence" value="ECO:0007669"/>
    <property type="project" value="InterPro"/>
</dbReference>
<dbReference type="GO" id="GO:0008270">
    <property type="term" value="F:zinc ion binding"/>
    <property type="evidence" value="ECO:0007669"/>
    <property type="project" value="InterPro"/>
</dbReference>
<dbReference type="GO" id="GO:0006424">
    <property type="term" value="P:glutamyl-tRNA aminoacylation"/>
    <property type="evidence" value="ECO:0007669"/>
    <property type="project" value="UniProtKB-UniRule"/>
</dbReference>
<dbReference type="CDD" id="cd00808">
    <property type="entry name" value="GluRS_core"/>
    <property type="match status" value="1"/>
</dbReference>
<dbReference type="FunFam" id="1.10.10.350:FF:000002">
    <property type="entry name" value="Glutamate--tRNA ligase"/>
    <property type="match status" value="1"/>
</dbReference>
<dbReference type="FunFam" id="3.40.50.620:FF:000007">
    <property type="entry name" value="Glutamate--tRNA ligase"/>
    <property type="match status" value="1"/>
</dbReference>
<dbReference type="Gene3D" id="1.10.10.350">
    <property type="match status" value="1"/>
</dbReference>
<dbReference type="Gene3D" id="3.40.50.620">
    <property type="entry name" value="HUPs"/>
    <property type="match status" value="1"/>
</dbReference>
<dbReference type="HAMAP" id="MF_00022">
    <property type="entry name" value="Glu_tRNA_synth_type1"/>
    <property type="match status" value="1"/>
</dbReference>
<dbReference type="InterPro" id="IPR045462">
    <property type="entry name" value="aa-tRNA-synth_I_cd-bd"/>
</dbReference>
<dbReference type="InterPro" id="IPR020751">
    <property type="entry name" value="aa-tRNA-synth_I_codon-bd_sub2"/>
</dbReference>
<dbReference type="InterPro" id="IPR001412">
    <property type="entry name" value="aa-tRNA-synth_I_CS"/>
</dbReference>
<dbReference type="InterPro" id="IPR008925">
    <property type="entry name" value="aa_tRNA-synth_I_cd-bd_sf"/>
</dbReference>
<dbReference type="InterPro" id="IPR004527">
    <property type="entry name" value="Glu-tRNA-ligase_bac/mito"/>
</dbReference>
<dbReference type="InterPro" id="IPR000924">
    <property type="entry name" value="Glu/Gln-tRNA-synth"/>
</dbReference>
<dbReference type="InterPro" id="IPR020058">
    <property type="entry name" value="Glu/Gln-tRNA-synth_Ib_cat-dom"/>
</dbReference>
<dbReference type="InterPro" id="IPR049940">
    <property type="entry name" value="GluQ/Sye"/>
</dbReference>
<dbReference type="InterPro" id="IPR033910">
    <property type="entry name" value="GluRS_core"/>
</dbReference>
<dbReference type="InterPro" id="IPR014729">
    <property type="entry name" value="Rossmann-like_a/b/a_fold"/>
</dbReference>
<dbReference type="NCBIfam" id="TIGR00464">
    <property type="entry name" value="gltX_bact"/>
    <property type="match status" value="1"/>
</dbReference>
<dbReference type="PANTHER" id="PTHR43311">
    <property type="entry name" value="GLUTAMATE--TRNA LIGASE"/>
    <property type="match status" value="1"/>
</dbReference>
<dbReference type="PANTHER" id="PTHR43311:SF2">
    <property type="entry name" value="GLUTAMATE--TRNA LIGASE, MITOCHONDRIAL-RELATED"/>
    <property type="match status" value="1"/>
</dbReference>
<dbReference type="Pfam" id="PF19269">
    <property type="entry name" value="Anticodon_2"/>
    <property type="match status" value="1"/>
</dbReference>
<dbReference type="Pfam" id="PF00749">
    <property type="entry name" value="tRNA-synt_1c"/>
    <property type="match status" value="1"/>
</dbReference>
<dbReference type="PRINTS" id="PR00987">
    <property type="entry name" value="TRNASYNTHGLU"/>
</dbReference>
<dbReference type="SUPFAM" id="SSF48163">
    <property type="entry name" value="An anticodon-binding domain of class I aminoacyl-tRNA synthetases"/>
    <property type="match status" value="1"/>
</dbReference>
<dbReference type="SUPFAM" id="SSF52374">
    <property type="entry name" value="Nucleotidylyl transferase"/>
    <property type="match status" value="1"/>
</dbReference>
<dbReference type="PROSITE" id="PS00178">
    <property type="entry name" value="AA_TRNA_LIGASE_I"/>
    <property type="match status" value="1"/>
</dbReference>
<comment type="function">
    <text evidence="1">Catalyzes the attachment of glutamate to tRNA(Glu) in a two-step reaction: glutamate is first activated by ATP to form Glu-AMP and then transferred to the acceptor end of tRNA(Glu).</text>
</comment>
<comment type="catalytic activity">
    <reaction evidence="1">
        <text>tRNA(Glu) + L-glutamate + ATP = L-glutamyl-tRNA(Glu) + AMP + diphosphate</text>
        <dbReference type="Rhea" id="RHEA:23540"/>
        <dbReference type="Rhea" id="RHEA-COMP:9663"/>
        <dbReference type="Rhea" id="RHEA-COMP:9680"/>
        <dbReference type="ChEBI" id="CHEBI:29985"/>
        <dbReference type="ChEBI" id="CHEBI:30616"/>
        <dbReference type="ChEBI" id="CHEBI:33019"/>
        <dbReference type="ChEBI" id="CHEBI:78442"/>
        <dbReference type="ChEBI" id="CHEBI:78520"/>
        <dbReference type="ChEBI" id="CHEBI:456215"/>
        <dbReference type="EC" id="6.1.1.17"/>
    </reaction>
</comment>
<comment type="subunit">
    <text evidence="1">Monomer.</text>
</comment>
<comment type="subcellular location">
    <subcellularLocation>
        <location evidence="1">Cytoplasm</location>
    </subcellularLocation>
</comment>
<comment type="similarity">
    <text evidence="1">Belongs to the class-I aminoacyl-tRNA synthetase family. Glutamate--tRNA ligase type 1 subfamily.</text>
</comment>
<gene>
    <name evidence="1" type="primary">gltX</name>
    <name type="ordered locus">LL2053</name>
    <name type="ORF">L0349</name>
</gene>
<accession>Q9CDZ7</accession>
<organism>
    <name type="scientific">Lactococcus lactis subsp. lactis (strain IL1403)</name>
    <name type="common">Streptococcus lactis</name>
    <dbReference type="NCBI Taxonomy" id="272623"/>
    <lineage>
        <taxon>Bacteria</taxon>
        <taxon>Bacillati</taxon>
        <taxon>Bacillota</taxon>
        <taxon>Bacilli</taxon>
        <taxon>Lactobacillales</taxon>
        <taxon>Streptococcaceae</taxon>
        <taxon>Lactococcus</taxon>
    </lineage>
</organism>